<name>PAO3_ORYSJ</name>
<keyword id="KW-0274">FAD</keyword>
<keyword id="KW-0285">Flavoprotein</keyword>
<keyword id="KW-0560">Oxidoreductase</keyword>
<keyword id="KW-0576">Peroxisome</keyword>
<keyword id="KW-1185">Reference proteome</keyword>
<comment type="function">
    <text evidence="3 6">Flavoenzyme involved in polyamine back-conversion (PubMed:21796433). Catalyzes the oxidation of the secondary amino group of polyamines, such as spermine, spermidine and their acetyl derivatives (PubMed:21796433). Substrate preference is spermidine &gt; norspermine &gt; thermospermine &gt; N(1)-acetylspermine &gt; spermine (PubMed:21796433). No activity detected when putrescine is used as substrate (PubMed:21796433). Plays an important role in the regulation of polyamine intracellular concentration (Probable).</text>
</comment>
<comment type="catalytic activity">
    <reaction evidence="3">
        <text>spermine + O2 + H2O = 3-aminopropanal + spermidine + H2O2</text>
        <dbReference type="Rhea" id="RHEA:25804"/>
        <dbReference type="ChEBI" id="CHEBI:15377"/>
        <dbReference type="ChEBI" id="CHEBI:15379"/>
        <dbReference type="ChEBI" id="CHEBI:16240"/>
        <dbReference type="ChEBI" id="CHEBI:45725"/>
        <dbReference type="ChEBI" id="CHEBI:57834"/>
        <dbReference type="ChEBI" id="CHEBI:58374"/>
    </reaction>
</comment>
<comment type="catalytic activity">
    <reaction evidence="3">
        <text>N(1)-acetylspermine + O2 + H2O = 3-acetamidopropanal + spermidine + H2O2</text>
        <dbReference type="Rhea" id="RHEA:25800"/>
        <dbReference type="ChEBI" id="CHEBI:15377"/>
        <dbReference type="ChEBI" id="CHEBI:15379"/>
        <dbReference type="ChEBI" id="CHEBI:16240"/>
        <dbReference type="ChEBI" id="CHEBI:30322"/>
        <dbReference type="ChEBI" id="CHEBI:57834"/>
        <dbReference type="ChEBI" id="CHEBI:58101"/>
    </reaction>
</comment>
<comment type="catalytic activity">
    <reaction evidence="3">
        <text>norspermine + O2 + H2O = norspermidine + 3-aminopropanal + H2O2</text>
        <dbReference type="Rhea" id="RHEA:25816"/>
        <dbReference type="ChEBI" id="CHEBI:15377"/>
        <dbReference type="ChEBI" id="CHEBI:15379"/>
        <dbReference type="ChEBI" id="CHEBI:16240"/>
        <dbReference type="ChEBI" id="CHEBI:57920"/>
        <dbReference type="ChEBI" id="CHEBI:58374"/>
        <dbReference type="ChEBI" id="CHEBI:58704"/>
    </reaction>
</comment>
<comment type="catalytic activity">
    <reaction evidence="3">
        <text>spermidine + O2 + H2O = 3-aminopropanal + putrescine + H2O2</text>
        <dbReference type="Rhea" id="RHEA:25808"/>
        <dbReference type="ChEBI" id="CHEBI:15377"/>
        <dbReference type="ChEBI" id="CHEBI:15379"/>
        <dbReference type="ChEBI" id="CHEBI:16240"/>
        <dbReference type="ChEBI" id="CHEBI:57834"/>
        <dbReference type="ChEBI" id="CHEBI:58374"/>
        <dbReference type="ChEBI" id="CHEBI:326268"/>
    </reaction>
</comment>
<comment type="catalytic activity">
    <reaction evidence="3">
        <text>thermospermine + O2 + H2O = 3-aminopropanal + spermidine + H2O2</text>
        <dbReference type="Rhea" id="RHEA:57836"/>
        <dbReference type="ChEBI" id="CHEBI:15377"/>
        <dbReference type="ChEBI" id="CHEBI:15379"/>
        <dbReference type="ChEBI" id="CHEBI:16240"/>
        <dbReference type="ChEBI" id="CHEBI:57834"/>
        <dbReference type="ChEBI" id="CHEBI:58374"/>
        <dbReference type="ChEBI" id="CHEBI:59903"/>
    </reaction>
</comment>
<comment type="cofactor">
    <cofactor evidence="3">
        <name>FAD</name>
        <dbReference type="ChEBI" id="CHEBI:57692"/>
    </cofactor>
    <text evidence="6">Binds 1 FAD per subunit.</text>
</comment>
<comment type="pathway">
    <text evidence="5">Amine and polyamine degradation; spermine degradation.</text>
</comment>
<comment type="pathway">
    <text evidence="5">Amine and polyamine degradation; spermidine degradation.</text>
</comment>
<comment type="subcellular location">
    <subcellularLocation>
        <location evidence="3">Peroxisome</location>
    </subcellularLocation>
</comment>
<comment type="tissue specificity">
    <text evidence="3">Widely expressed.</text>
</comment>
<comment type="similarity">
    <text evidence="5">Belongs to the flavin monoamine oxidase family.</text>
</comment>
<comment type="sequence caution" evidence="5">
    <conflict type="erroneous gene model prediction">
        <sequence resource="EMBL-CDS" id="BAM17621"/>
    </conflict>
</comment>
<protein>
    <recommendedName>
        <fullName evidence="4">Polyamine oxidase 3</fullName>
        <shortName evidence="4">OsPAO3</shortName>
        <ecNumber evidence="3">1.5.3.-</ecNumber>
    </recommendedName>
</protein>
<accession>Q7X809</accession>
<accession>I4DI81</accession>
<gene>
    <name evidence="4" type="primary">PAO3</name>
    <name evidence="7" type="ordered locus">Os04g0623300</name>
    <name evidence="5" type="ordered locus">LOC_Os04g53190</name>
    <name evidence="10" type="ORF">OsJ_16215</name>
    <name evidence="9" type="ORF">OSJNBa0053K19.6</name>
    <name evidence="8" type="ORF">OSJNBb0085C12.17</name>
</gene>
<proteinExistence type="evidence at protein level"/>
<feature type="chain" id="PRO_0000445722" description="Polyamine oxidase 3">
    <location>
        <begin position="1"/>
        <end position="484"/>
    </location>
</feature>
<feature type="short sequence motif" description="Microbody targeting signal" evidence="2">
    <location>
        <begin position="482"/>
        <end position="484"/>
    </location>
</feature>
<feature type="binding site" evidence="1">
    <location>
        <position position="47"/>
    </location>
    <ligand>
        <name>FAD</name>
        <dbReference type="ChEBI" id="CHEBI:57692"/>
    </ligand>
</feature>
<feature type="binding site" evidence="1">
    <location>
        <position position="55"/>
    </location>
    <ligand>
        <name>FAD</name>
        <dbReference type="ChEBI" id="CHEBI:57692"/>
    </ligand>
</feature>
<feature type="binding site" evidence="1">
    <location>
        <position position="236"/>
    </location>
    <ligand>
        <name>FAD</name>
        <dbReference type="ChEBI" id="CHEBI:57692"/>
    </ligand>
</feature>
<feature type="binding site" evidence="1">
    <location>
        <position position="423"/>
    </location>
    <ligand>
        <name>FAD</name>
        <dbReference type="ChEBI" id="CHEBI:57692"/>
    </ligand>
</feature>
<organism>
    <name type="scientific">Oryza sativa subsp. japonica</name>
    <name type="common">Rice</name>
    <dbReference type="NCBI Taxonomy" id="39947"/>
    <lineage>
        <taxon>Eukaryota</taxon>
        <taxon>Viridiplantae</taxon>
        <taxon>Streptophyta</taxon>
        <taxon>Embryophyta</taxon>
        <taxon>Tracheophyta</taxon>
        <taxon>Spermatophyta</taxon>
        <taxon>Magnoliopsida</taxon>
        <taxon>Liliopsida</taxon>
        <taxon>Poales</taxon>
        <taxon>Poaceae</taxon>
        <taxon>BOP clade</taxon>
        <taxon>Oryzoideae</taxon>
        <taxon>Oryzeae</taxon>
        <taxon>Oryzinae</taxon>
        <taxon>Oryza</taxon>
        <taxon>Oryza sativa</taxon>
    </lineage>
</organism>
<reference key="1">
    <citation type="submission" date="2009-05" db="EMBL/GenBank/DDBJ databases">
        <title>Oryza sativa japonica group DNA, complete sequence, cultivar: Jamaica.</title>
        <authorList>
            <person name="Katsuyuki I."/>
            <person name="Kuboyama T."/>
            <person name="Matsumoto T."/>
            <person name="Wu J."/>
            <person name="Kanamori H."/>
        </authorList>
    </citation>
    <scope>NUCLEOTIDE SEQUENCE [GENOMIC DNA]</scope>
</reference>
<reference key="2">
    <citation type="journal article" date="2002" name="Nature">
        <title>Sequence and analysis of rice chromosome 4.</title>
        <authorList>
            <person name="Feng Q."/>
            <person name="Zhang Y."/>
            <person name="Hao P."/>
            <person name="Wang S."/>
            <person name="Fu G."/>
            <person name="Huang Y."/>
            <person name="Li Y."/>
            <person name="Zhu J."/>
            <person name="Liu Y."/>
            <person name="Hu X."/>
            <person name="Jia P."/>
            <person name="Zhang Y."/>
            <person name="Zhao Q."/>
            <person name="Ying K."/>
            <person name="Yu S."/>
            <person name="Tang Y."/>
            <person name="Weng Q."/>
            <person name="Zhang L."/>
            <person name="Lu Y."/>
            <person name="Mu J."/>
            <person name="Lu Y."/>
            <person name="Zhang L.S."/>
            <person name="Yu Z."/>
            <person name="Fan D."/>
            <person name="Liu X."/>
            <person name="Lu T."/>
            <person name="Li C."/>
            <person name="Wu Y."/>
            <person name="Sun T."/>
            <person name="Lei H."/>
            <person name="Li T."/>
            <person name="Hu H."/>
            <person name="Guan J."/>
            <person name="Wu M."/>
            <person name="Zhang R."/>
            <person name="Zhou B."/>
            <person name="Chen Z."/>
            <person name="Chen L."/>
            <person name="Jin Z."/>
            <person name="Wang R."/>
            <person name="Yin H."/>
            <person name="Cai Z."/>
            <person name="Ren S."/>
            <person name="Lv G."/>
            <person name="Gu W."/>
            <person name="Zhu G."/>
            <person name="Tu Y."/>
            <person name="Jia J."/>
            <person name="Zhang Y."/>
            <person name="Chen J."/>
            <person name="Kang H."/>
            <person name="Chen X."/>
            <person name="Shao C."/>
            <person name="Sun Y."/>
            <person name="Hu Q."/>
            <person name="Zhang X."/>
            <person name="Zhang W."/>
            <person name="Wang L."/>
            <person name="Ding C."/>
            <person name="Sheng H."/>
            <person name="Gu J."/>
            <person name="Chen S."/>
            <person name="Ni L."/>
            <person name="Zhu F."/>
            <person name="Chen W."/>
            <person name="Lan L."/>
            <person name="Lai Y."/>
            <person name="Cheng Z."/>
            <person name="Gu M."/>
            <person name="Jiang J."/>
            <person name="Li J."/>
            <person name="Hong G."/>
            <person name="Xue Y."/>
            <person name="Han B."/>
        </authorList>
    </citation>
    <scope>NUCLEOTIDE SEQUENCE [LARGE SCALE GENOMIC DNA]</scope>
    <source>
        <strain>cv. Nipponbare</strain>
    </source>
</reference>
<reference key="3">
    <citation type="journal article" date="2005" name="Nature">
        <title>The map-based sequence of the rice genome.</title>
        <authorList>
            <consortium name="International rice genome sequencing project (IRGSP)"/>
        </authorList>
    </citation>
    <scope>NUCLEOTIDE SEQUENCE [LARGE SCALE GENOMIC DNA]</scope>
    <source>
        <strain>cv. Nipponbare</strain>
    </source>
</reference>
<reference key="4">
    <citation type="journal article" date="2008" name="Nucleic Acids Res.">
        <title>The rice annotation project database (RAP-DB): 2008 update.</title>
        <authorList>
            <consortium name="The rice annotation project (RAP)"/>
        </authorList>
    </citation>
    <scope>GENOME REANNOTATION</scope>
    <source>
        <strain>cv. Nipponbare</strain>
    </source>
</reference>
<reference key="5">
    <citation type="journal article" date="2013" name="Rice">
        <title>Improvement of the Oryza sativa Nipponbare reference genome using next generation sequence and optical map data.</title>
        <authorList>
            <person name="Kawahara Y."/>
            <person name="de la Bastide M."/>
            <person name="Hamilton J.P."/>
            <person name="Kanamori H."/>
            <person name="McCombie W.R."/>
            <person name="Ouyang S."/>
            <person name="Schwartz D.C."/>
            <person name="Tanaka T."/>
            <person name="Wu J."/>
            <person name="Zhou S."/>
            <person name="Childs K.L."/>
            <person name="Davidson R.M."/>
            <person name="Lin H."/>
            <person name="Quesada-Ocampo L."/>
            <person name="Vaillancourt B."/>
            <person name="Sakai H."/>
            <person name="Lee S.S."/>
            <person name="Kim J."/>
            <person name="Numa H."/>
            <person name="Itoh T."/>
            <person name="Buell C.R."/>
            <person name="Matsumoto T."/>
        </authorList>
    </citation>
    <scope>GENOME REANNOTATION</scope>
    <source>
        <strain>cv. Nipponbare</strain>
    </source>
</reference>
<reference key="6">
    <citation type="journal article" date="2005" name="PLoS Biol.">
        <title>The genomes of Oryza sativa: a history of duplications.</title>
        <authorList>
            <person name="Yu J."/>
            <person name="Wang J."/>
            <person name="Lin W."/>
            <person name="Li S."/>
            <person name="Li H."/>
            <person name="Zhou J."/>
            <person name="Ni P."/>
            <person name="Dong W."/>
            <person name="Hu S."/>
            <person name="Zeng C."/>
            <person name="Zhang J."/>
            <person name="Zhang Y."/>
            <person name="Li R."/>
            <person name="Xu Z."/>
            <person name="Li S."/>
            <person name="Li X."/>
            <person name="Zheng H."/>
            <person name="Cong L."/>
            <person name="Lin L."/>
            <person name="Yin J."/>
            <person name="Geng J."/>
            <person name="Li G."/>
            <person name="Shi J."/>
            <person name="Liu J."/>
            <person name="Lv H."/>
            <person name="Li J."/>
            <person name="Wang J."/>
            <person name="Deng Y."/>
            <person name="Ran L."/>
            <person name="Shi X."/>
            <person name="Wang X."/>
            <person name="Wu Q."/>
            <person name="Li C."/>
            <person name="Ren X."/>
            <person name="Wang J."/>
            <person name="Wang X."/>
            <person name="Li D."/>
            <person name="Liu D."/>
            <person name="Zhang X."/>
            <person name="Ji Z."/>
            <person name="Zhao W."/>
            <person name="Sun Y."/>
            <person name="Zhang Z."/>
            <person name="Bao J."/>
            <person name="Han Y."/>
            <person name="Dong L."/>
            <person name="Ji J."/>
            <person name="Chen P."/>
            <person name="Wu S."/>
            <person name="Liu J."/>
            <person name="Xiao Y."/>
            <person name="Bu D."/>
            <person name="Tan J."/>
            <person name="Yang L."/>
            <person name="Ye C."/>
            <person name="Zhang J."/>
            <person name="Xu J."/>
            <person name="Zhou Y."/>
            <person name="Yu Y."/>
            <person name="Zhang B."/>
            <person name="Zhuang S."/>
            <person name="Wei H."/>
            <person name="Liu B."/>
            <person name="Lei M."/>
            <person name="Yu H."/>
            <person name="Li Y."/>
            <person name="Xu H."/>
            <person name="Wei S."/>
            <person name="He X."/>
            <person name="Fang L."/>
            <person name="Zhang Z."/>
            <person name="Zhang Y."/>
            <person name="Huang X."/>
            <person name="Su Z."/>
            <person name="Tong W."/>
            <person name="Li J."/>
            <person name="Tong Z."/>
            <person name="Li S."/>
            <person name="Ye J."/>
            <person name="Wang L."/>
            <person name="Fang L."/>
            <person name="Lei T."/>
            <person name="Chen C.-S."/>
            <person name="Chen H.-C."/>
            <person name="Xu Z."/>
            <person name="Li H."/>
            <person name="Huang H."/>
            <person name="Zhang F."/>
            <person name="Xu H."/>
            <person name="Li N."/>
            <person name="Zhao C."/>
            <person name="Li S."/>
            <person name="Dong L."/>
            <person name="Huang Y."/>
            <person name="Li L."/>
            <person name="Xi Y."/>
            <person name="Qi Q."/>
            <person name="Li W."/>
            <person name="Zhang B."/>
            <person name="Hu W."/>
            <person name="Zhang Y."/>
            <person name="Tian X."/>
            <person name="Jiao Y."/>
            <person name="Liang X."/>
            <person name="Jin J."/>
            <person name="Gao L."/>
            <person name="Zheng W."/>
            <person name="Hao B."/>
            <person name="Liu S.-M."/>
            <person name="Wang W."/>
            <person name="Yuan L."/>
            <person name="Cao M."/>
            <person name="McDermott J."/>
            <person name="Samudrala R."/>
            <person name="Wang J."/>
            <person name="Wong G.K.-S."/>
            <person name="Yang H."/>
        </authorList>
    </citation>
    <scope>NUCLEOTIDE SEQUENCE [LARGE SCALE GENOMIC DNA]</scope>
    <source>
        <strain>cv. Nipponbare</strain>
    </source>
</reference>
<reference key="7">
    <citation type="journal article" date="2012" name="Amino Acids">
        <title>Constitutively and highly expressed Oryza sativa polyamine oxidases localize in peroxisomes and catalyze polyamine back conversion.</title>
        <authorList>
            <person name="Ono Y."/>
            <person name="Kim D.W."/>
            <person name="Watanabe K."/>
            <person name="Sasaki A."/>
            <person name="Niitsu M."/>
            <person name="Berberich T."/>
            <person name="Kusano T."/>
            <person name="Takahashi Y."/>
        </authorList>
    </citation>
    <scope>FUNCTION</scope>
    <scope>CATALYTIC ACTIVITY</scope>
    <scope>COFACTOR</scope>
    <scope>SUBCELLULAR LOCATION</scope>
    <scope>TISSUE SPECIFICITY</scope>
</reference>
<sequence>MANNSSYGENVRRKSHTPSAIVIGSGFAGIAAANALRNASFEVVLLESRDRIGGRIHTDYSFGFPVDLGASWLHGVCEENPLAPIIGRLGLPLYRTSGDDSVLFDHDLESYALYDTKGHQVPQELVEKIGKVFETILEETGKLREETKEDISIAKAIAIVMERNPHLRQEGIAHDVLQWYLCRMEGWFATDADAISLQGWDQEVLLPGGHGLMVRGYRPVINTLAKGLDIRLGHRVVEIVRHRNRVEVTVSSGKTFVADAAVIAVPLGVLKANTIKFEPRLPEWKEEAIRELSVGVENKIILHFSEVFWPNVEFLGVVSSTTYGCSYFLNLHKATGHPVLVYMPAGRLACDIEKLSDEAAAQFAFSQLKKILPNAAEPIHYLVSHWGSDENTLGSYTFDGVGKPRDLYEKLRIPVDNLFFAGEATSVQYTGTVHGAFSTGLMAAEECRMRVLERFRELDMLEMCHPAMGEQTATVSVPLLISRL</sequence>
<evidence type="ECO:0000250" key="1">
    <source>
        <dbReference type="UniProtKB" id="O64411"/>
    </source>
</evidence>
<evidence type="ECO:0000255" key="2"/>
<evidence type="ECO:0000269" key="3">
    <source>
    </source>
</evidence>
<evidence type="ECO:0000303" key="4">
    <source>
    </source>
</evidence>
<evidence type="ECO:0000305" key="5"/>
<evidence type="ECO:0000305" key="6">
    <source>
    </source>
</evidence>
<evidence type="ECO:0000312" key="7">
    <source>
        <dbReference type="EMBL" id="BAF15837.1"/>
    </source>
</evidence>
<evidence type="ECO:0000312" key="8">
    <source>
        <dbReference type="EMBL" id="CAD41837.2"/>
    </source>
</evidence>
<evidence type="ECO:0000312" key="9">
    <source>
        <dbReference type="EMBL" id="CAE03498.2"/>
    </source>
</evidence>
<evidence type="ECO:0000312" key="10">
    <source>
        <dbReference type="EMBL" id="EEE61715.1"/>
    </source>
</evidence>
<dbReference type="EC" id="1.5.3.-" evidence="3"/>
<dbReference type="EMBL" id="AP011523">
    <property type="protein sequence ID" value="BAM17621.1"/>
    <property type="status" value="ALT_SEQ"/>
    <property type="molecule type" value="Genomic_DNA"/>
</dbReference>
<dbReference type="EMBL" id="AL606660">
    <property type="protein sequence ID" value="CAD41837.2"/>
    <property type="molecule type" value="Genomic_DNA"/>
</dbReference>
<dbReference type="EMBL" id="AL606645">
    <property type="protein sequence ID" value="CAE03498.2"/>
    <property type="molecule type" value="Genomic_DNA"/>
</dbReference>
<dbReference type="EMBL" id="AP008210">
    <property type="protein sequence ID" value="BAF15837.1"/>
    <property type="molecule type" value="Genomic_DNA"/>
</dbReference>
<dbReference type="EMBL" id="AP014960">
    <property type="protein sequence ID" value="BAS91077.1"/>
    <property type="molecule type" value="Genomic_DNA"/>
</dbReference>
<dbReference type="EMBL" id="CM000141">
    <property type="protein sequence ID" value="EEE61715.1"/>
    <property type="molecule type" value="Genomic_DNA"/>
</dbReference>
<dbReference type="SMR" id="Q7X809"/>
<dbReference type="FunCoup" id="Q7X809">
    <property type="interactions" value="20"/>
</dbReference>
<dbReference type="STRING" id="39947.Q7X809"/>
<dbReference type="PaxDb" id="39947-Q7X809"/>
<dbReference type="EnsemblPlants" id="Os04t0623300-01">
    <property type="protein sequence ID" value="Os04t0623300-01"/>
    <property type="gene ID" value="Os04g0623300"/>
</dbReference>
<dbReference type="Gramene" id="Os04t0623300-01">
    <property type="protein sequence ID" value="Os04t0623300-01"/>
    <property type="gene ID" value="Os04g0623300"/>
</dbReference>
<dbReference type="KEGG" id="dosa:Os04g0623300"/>
<dbReference type="KEGG" id="osa:4337046"/>
<dbReference type="eggNOG" id="KOG0029">
    <property type="taxonomic scope" value="Eukaryota"/>
</dbReference>
<dbReference type="InParanoid" id="Q7X809"/>
<dbReference type="OMA" id="EFFDNYQ"/>
<dbReference type="OrthoDB" id="5046242at2759"/>
<dbReference type="UniPathway" id="UPA00211"/>
<dbReference type="UniPathway" id="UPA00250"/>
<dbReference type="Proteomes" id="UP000000763">
    <property type="component" value="Chromosome 4"/>
</dbReference>
<dbReference type="Proteomes" id="UP000007752">
    <property type="component" value="Chromosome 4"/>
</dbReference>
<dbReference type="Proteomes" id="UP000059680">
    <property type="component" value="Chromosome 4"/>
</dbReference>
<dbReference type="ExpressionAtlas" id="Q7X809">
    <property type="expression patterns" value="baseline and differential"/>
</dbReference>
<dbReference type="GO" id="GO:0005777">
    <property type="term" value="C:peroxisome"/>
    <property type="evidence" value="ECO:0000314"/>
    <property type="project" value="UniProtKB"/>
</dbReference>
<dbReference type="GO" id="GO:0050660">
    <property type="term" value="F:flavin adenine dinucleotide binding"/>
    <property type="evidence" value="ECO:0000314"/>
    <property type="project" value="UniProtKB"/>
</dbReference>
<dbReference type="GO" id="GO:0052903">
    <property type="term" value="F:N(1)-acetylpolyamine oxidase (3-acetamidopropanal-forming) activity"/>
    <property type="evidence" value="ECO:0000314"/>
    <property type="project" value="UniProtKB"/>
</dbReference>
<dbReference type="GO" id="GO:0052901">
    <property type="term" value="F:spermine oxidase activity"/>
    <property type="evidence" value="ECO:0000314"/>
    <property type="project" value="UniProtKB"/>
</dbReference>
<dbReference type="GO" id="GO:1990534">
    <property type="term" value="F:thermospermine oxidase activity"/>
    <property type="evidence" value="ECO:0007669"/>
    <property type="project" value="RHEA"/>
</dbReference>
<dbReference type="GO" id="GO:0046203">
    <property type="term" value="P:spermidine catabolic process"/>
    <property type="evidence" value="ECO:0000314"/>
    <property type="project" value="UniProtKB"/>
</dbReference>
<dbReference type="GO" id="GO:0046208">
    <property type="term" value="P:spermine catabolic process"/>
    <property type="evidence" value="ECO:0000314"/>
    <property type="project" value="UniProtKB"/>
</dbReference>
<dbReference type="GO" id="GO:1903602">
    <property type="term" value="P:thermospermine catabolic process"/>
    <property type="evidence" value="ECO:0000314"/>
    <property type="project" value="UniProtKB"/>
</dbReference>
<dbReference type="Gene3D" id="3.90.660.10">
    <property type="match status" value="1"/>
</dbReference>
<dbReference type="Gene3D" id="3.50.50.60">
    <property type="entry name" value="FAD/NAD(P)-binding domain"/>
    <property type="match status" value="1"/>
</dbReference>
<dbReference type="InterPro" id="IPR002937">
    <property type="entry name" value="Amino_oxidase"/>
</dbReference>
<dbReference type="InterPro" id="IPR036188">
    <property type="entry name" value="FAD/NAD-bd_sf"/>
</dbReference>
<dbReference type="InterPro" id="IPR001613">
    <property type="entry name" value="Flavin_amine_oxidase"/>
</dbReference>
<dbReference type="InterPro" id="IPR050281">
    <property type="entry name" value="Flavin_monoamine_oxidase"/>
</dbReference>
<dbReference type="PANTHER" id="PTHR10742">
    <property type="entry name" value="FLAVIN MONOAMINE OXIDASE"/>
    <property type="match status" value="1"/>
</dbReference>
<dbReference type="PANTHER" id="PTHR10742:SF386">
    <property type="entry name" value="LYSINE-SPECIFIC HISTONE DEMETHYLASE 1A"/>
    <property type="match status" value="1"/>
</dbReference>
<dbReference type="Pfam" id="PF01593">
    <property type="entry name" value="Amino_oxidase"/>
    <property type="match status" value="1"/>
</dbReference>
<dbReference type="PRINTS" id="PR00757">
    <property type="entry name" value="AMINEOXDASEF"/>
</dbReference>
<dbReference type="SUPFAM" id="SSF54373">
    <property type="entry name" value="FAD-linked reductases, C-terminal domain"/>
    <property type="match status" value="1"/>
</dbReference>
<dbReference type="SUPFAM" id="SSF51905">
    <property type="entry name" value="FAD/NAD(P)-binding domain"/>
    <property type="match status" value="1"/>
</dbReference>